<evidence type="ECO:0000255" key="1">
    <source>
        <dbReference type="HAMAP-Rule" id="MF_00366"/>
    </source>
</evidence>
<keyword id="KW-0240">DNA-directed RNA polymerase</keyword>
<keyword id="KW-0548">Nucleotidyltransferase</keyword>
<keyword id="KW-0804">Transcription</keyword>
<keyword id="KW-0808">Transferase</keyword>
<comment type="function">
    <text evidence="1">Promotes RNA polymerase assembly. Latches the N- and C-terminal regions of the beta' subunit thereby facilitating its interaction with the beta and alpha subunits.</text>
</comment>
<comment type="catalytic activity">
    <reaction evidence="1">
        <text>RNA(n) + a ribonucleoside 5'-triphosphate = RNA(n+1) + diphosphate</text>
        <dbReference type="Rhea" id="RHEA:21248"/>
        <dbReference type="Rhea" id="RHEA-COMP:14527"/>
        <dbReference type="Rhea" id="RHEA-COMP:17342"/>
        <dbReference type="ChEBI" id="CHEBI:33019"/>
        <dbReference type="ChEBI" id="CHEBI:61557"/>
        <dbReference type="ChEBI" id="CHEBI:140395"/>
        <dbReference type="EC" id="2.7.7.6"/>
    </reaction>
</comment>
<comment type="subunit">
    <text evidence="1">The RNAP catalytic core consists of 2 alpha, 1 beta, 1 beta' and 1 omega subunit. When a sigma factor is associated with the core the holoenzyme is formed, which can initiate transcription.</text>
</comment>
<comment type="similarity">
    <text evidence="1">Belongs to the RNA polymerase subunit omega family.</text>
</comment>
<gene>
    <name evidence="1" type="primary">rpoZ</name>
    <name type="ordered locus">PFLU_5994</name>
</gene>
<proteinExistence type="inferred from homology"/>
<name>RPOZ_PSEFS</name>
<dbReference type="EC" id="2.7.7.6" evidence="1"/>
<dbReference type="EMBL" id="AM181176">
    <property type="protein sequence ID" value="CAY53525.1"/>
    <property type="molecule type" value="Genomic_DNA"/>
</dbReference>
<dbReference type="RefSeq" id="WP_003176920.1">
    <property type="nucleotide sequence ID" value="NC_012660.1"/>
</dbReference>
<dbReference type="SMR" id="C3K482"/>
<dbReference type="STRING" id="294.SRM1_05690"/>
<dbReference type="GeneID" id="93513997"/>
<dbReference type="eggNOG" id="COG1758">
    <property type="taxonomic scope" value="Bacteria"/>
</dbReference>
<dbReference type="HOGENOM" id="CLU_125406_5_2_6"/>
<dbReference type="OrthoDB" id="9796300at2"/>
<dbReference type="GO" id="GO:0000428">
    <property type="term" value="C:DNA-directed RNA polymerase complex"/>
    <property type="evidence" value="ECO:0007669"/>
    <property type="project" value="UniProtKB-KW"/>
</dbReference>
<dbReference type="GO" id="GO:0003677">
    <property type="term" value="F:DNA binding"/>
    <property type="evidence" value="ECO:0007669"/>
    <property type="project" value="UniProtKB-UniRule"/>
</dbReference>
<dbReference type="GO" id="GO:0003899">
    <property type="term" value="F:DNA-directed RNA polymerase activity"/>
    <property type="evidence" value="ECO:0007669"/>
    <property type="project" value="UniProtKB-UniRule"/>
</dbReference>
<dbReference type="GO" id="GO:0006351">
    <property type="term" value="P:DNA-templated transcription"/>
    <property type="evidence" value="ECO:0007669"/>
    <property type="project" value="UniProtKB-UniRule"/>
</dbReference>
<dbReference type="Gene3D" id="3.90.940.10">
    <property type="match status" value="1"/>
</dbReference>
<dbReference type="HAMAP" id="MF_00366">
    <property type="entry name" value="RNApol_bact_RpoZ"/>
    <property type="match status" value="1"/>
</dbReference>
<dbReference type="InterPro" id="IPR003716">
    <property type="entry name" value="DNA-dir_RNA_pol_omega"/>
</dbReference>
<dbReference type="InterPro" id="IPR006110">
    <property type="entry name" value="Pol_omega/Rpo6/RPB6"/>
</dbReference>
<dbReference type="InterPro" id="IPR036161">
    <property type="entry name" value="RPB6/omega-like_sf"/>
</dbReference>
<dbReference type="NCBIfam" id="TIGR00690">
    <property type="entry name" value="rpoZ"/>
    <property type="match status" value="1"/>
</dbReference>
<dbReference type="PANTHER" id="PTHR34476">
    <property type="entry name" value="DNA-DIRECTED RNA POLYMERASE SUBUNIT OMEGA"/>
    <property type="match status" value="1"/>
</dbReference>
<dbReference type="PANTHER" id="PTHR34476:SF1">
    <property type="entry name" value="DNA-DIRECTED RNA POLYMERASE SUBUNIT OMEGA"/>
    <property type="match status" value="1"/>
</dbReference>
<dbReference type="Pfam" id="PF01192">
    <property type="entry name" value="RNA_pol_Rpb6"/>
    <property type="match status" value="1"/>
</dbReference>
<dbReference type="SMART" id="SM01409">
    <property type="entry name" value="RNA_pol_Rpb6"/>
    <property type="match status" value="1"/>
</dbReference>
<dbReference type="SUPFAM" id="SSF63562">
    <property type="entry name" value="RPB6/omega subunit-like"/>
    <property type="match status" value="1"/>
</dbReference>
<organism>
    <name type="scientific">Pseudomonas fluorescens (strain SBW25)</name>
    <dbReference type="NCBI Taxonomy" id="216595"/>
    <lineage>
        <taxon>Bacteria</taxon>
        <taxon>Pseudomonadati</taxon>
        <taxon>Pseudomonadota</taxon>
        <taxon>Gammaproteobacteria</taxon>
        <taxon>Pseudomonadales</taxon>
        <taxon>Pseudomonadaceae</taxon>
        <taxon>Pseudomonas</taxon>
    </lineage>
</organism>
<feature type="chain" id="PRO_1000205526" description="DNA-directed RNA polymerase subunit omega">
    <location>
        <begin position="1"/>
        <end position="87"/>
    </location>
</feature>
<accession>C3K482</accession>
<sequence>MARVTVEDCLEHVDNRFELVMLSTKRARQLATGGKEPLVQWENDKPTVVALREIAEGLMSYEFIANAEIVEDEPLFAAFEDESNEAV</sequence>
<reference key="1">
    <citation type="journal article" date="2009" name="Genome Biol.">
        <title>Genomic and genetic analyses of diversity and plant interactions of Pseudomonas fluorescens.</title>
        <authorList>
            <person name="Silby M.W."/>
            <person name="Cerdeno-Tarraga A.M."/>
            <person name="Vernikos G.S."/>
            <person name="Giddens S.R."/>
            <person name="Jackson R.W."/>
            <person name="Preston G.M."/>
            <person name="Zhang X.-X."/>
            <person name="Moon C.D."/>
            <person name="Gehrig S.M."/>
            <person name="Godfrey S.A.C."/>
            <person name="Knight C.G."/>
            <person name="Malone J.G."/>
            <person name="Robinson Z."/>
            <person name="Spiers A.J."/>
            <person name="Harris S."/>
            <person name="Challis G.L."/>
            <person name="Yaxley A.M."/>
            <person name="Harris D."/>
            <person name="Seeger K."/>
            <person name="Murphy L."/>
            <person name="Rutter S."/>
            <person name="Squares R."/>
            <person name="Quail M.A."/>
            <person name="Saunders E."/>
            <person name="Mavromatis K."/>
            <person name="Brettin T.S."/>
            <person name="Bentley S.D."/>
            <person name="Hothersall J."/>
            <person name="Stephens E."/>
            <person name="Thomas C.M."/>
            <person name="Parkhill J."/>
            <person name="Levy S.B."/>
            <person name="Rainey P.B."/>
            <person name="Thomson N.R."/>
        </authorList>
    </citation>
    <scope>NUCLEOTIDE SEQUENCE [LARGE SCALE GENOMIC DNA]</scope>
    <source>
        <strain>SBW25</strain>
    </source>
</reference>
<protein>
    <recommendedName>
        <fullName evidence="1">DNA-directed RNA polymerase subunit omega</fullName>
        <shortName evidence="1">RNAP omega subunit</shortName>
        <ecNumber evidence="1">2.7.7.6</ecNumber>
    </recommendedName>
    <alternativeName>
        <fullName evidence="1">RNA polymerase omega subunit</fullName>
    </alternativeName>
    <alternativeName>
        <fullName evidence="1">Transcriptase subunit omega</fullName>
    </alternativeName>
</protein>